<dbReference type="EMBL" id="AE002160">
    <property type="protein sequence ID" value="AAF39700.1"/>
    <property type="status" value="ALT_INIT"/>
    <property type="molecule type" value="Genomic_DNA"/>
</dbReference>
<dbReference type="PIR" id="B81651">
    <property type="entry name" value="B81651"/>
</dbReference>
<dbReference type="RefSeq" id="WP_010231905.1">
    <property type="nucleotide sequence ID" value="NZ_CP063055.1"/>
</dbReference>
<dbReference type="SMR" id="Q9PJC4"/>
<dbReference type="GeneID" id="1246276"/>
<dbReference type="KEGG" id="cmu:TC_0907"/>
<dbReference type="eggNOG" id="COG0268">
    <property type="taxonomic scope" value="Bacteria"/>
</dbReference>
<dbReference type="HOGENOM" id="CLU_160655_2_0_0"/>
<dbReference type="OrthoDB" id="21589at2"/>
<dbReference type="Proteomes" id="UP000000800">
    <property type="component" value="Chromosome"/>
</dbReference>
<dbReference type="GO" id="GO:0005829">
    <property type="term" value="C:cytosol"/>
    <property type="evidence" value="ECO:0007669"/>
    <property type="project" value="TreeGrafter"/>
</dbReference>
<dbReference type="GO" id="GO:0015935">
    <property type="term" value="C:small ribosomal subunit"/>
    <property type="evidence" value="ECO:0007669"/>
    <property type="project" value="TreeGrafter"/>
</dbReference>
<dbReference type="GO" id="GO:0070181">
    <property type="term" value="F:small ribosomal subunit rRNA binding"/>
    <property type="evidence" value="ECO:0007669"/>
    <property type="project" value="TreeGrafter"/>
</dbReference>
<dbReference type="GO" id="GO:0003735">
    <property type="term" value="F:structural constituent of ribosome"/>
    <property type="evidence" value="ECO:0007669"/>
    <property type="project" value="InterPro"/>
</dbReference>
<dbReference type="GO" id="GO:0006412">
    <property type="term" value="P:translation"/>
    <property type="evidence" value="ECO:0007669"/>
    <property type="project" value="UniProtKB-UniRule"/>
</dbReference>
<dbReference type="FunFam" id="1.20.58.110:FF:000006">
    <property type="entry name" value="30S ribosomal protein S20"/>
    <property type="match status" value="1"/>
</dbReference>
<dbReference type="Gene3D" id="1.20.58.110">
    <property type="entry name" value="Ribosomal protein S20"/>
    <property type="match status" value="1"/>
</dbReference>
<dbReference type="HAMAP" id="MF_00500">
    <property type="entry name" value="Ribosomal_bS20"/>
    <property type="match status" value="1"/>
</dbReference>
<dbReference type="InterPro" id="IPR002583">
    <property type="entry name" value="Ribosomal_bS20"/>
</dbReference>
<dbReference type="InterPro" id="IPR036510">
    <property type="entry name" value="Ribosomal_bS20_sf"/>
</dbReference>
<dbReference type="NCBIfam" id="TIGR00029">
    <property type="entry name" value="S20"/>
    <property type="match status" value="1"/>
</dbReference>
<dbReference type="PANTHER" id="PTHR33398">
    <property type="entry name" value="30S RIBOSOMAL PROTEIN S20"/>
    <property type="match status" value="1"/>
</dbReference>
<dbReference type="PANTHER" id="PTHR33398:SF1">
    <property type="entry name" value="SMALL RIBOSOMAL SUBUNIT PROTEIN BS20C"/>
    <property type="match status" value="1"/>
</dbReference>
<dbReference type="Pfam" id="PF01649">
    <property type="entry name" value="Ribosomal_S20p"/>
    <property type="match status" value="1"/>
</dbReference>
<dbReference type="SUPFAM" id="SSF46992">
    <property type="entry name" value="Ribosomal protein S20"/>
    <property type="match status" value="1"/>
</dbReference>
<gene>
    <name evidence="1" type="primary">rpsT</name>
    <name type="ordered locus">TC_0907</name>
</gene>
<comment type="function">
    <text evidence="1">Binds directly to 16S ribosomal RNA.</text>
</comment>
<comment type="similarity">
    <text evidence="1">Belongs to the bacterial ribosomal protein bS20 family.</text>
</comment>
<comment type="sequence caution" evidence="3">
    <conflict type="erroneous initiation">
        <sequence resource="EMBL-CDS" id="AAF39700"/>
    </conflict>
</comment>
<organism>
    <name type="scientific">Chlamydia muridarum (strain MoPn / Nigg)</name>
    <dbReference type="NCBI Taxonomy" id="243161"/>
    <lineage>
        <taxon>Bacteria</taxon>
        <taxon>Pseudomonadati</taxon>
        <taxon>Chlamydiota</taxon>
        <taxon>Chlamydiia</taxon>
        <taxon>Chlamydiales</taxon>
        <taxon>Chlamydiaceae</taxon>
        <taxon>Chlamydia/Chlamydophila group</taxon>
        <taxon>Chlamydia</taxon>
    </lineage>
</organism>
<protein>
    <recommendedName>
        <fullName evidence="1">Small ribosomal subunit protein bS20</fullName>
    </recommendedName>
    <alternativeName>
        <fullName evidence="3">30S ribosomal protein S20</fullName>
    </alternativeName>
</protein>
<accession>Q9PJC4</accession>
<proteinExistence type="inferred from homology"/>
<keyword id="KW-0687">Ribonucleoprotein</keyword>
<keyword id="KW-0689">Ribosomal protein</keyword>
<keyword id="KW-0694">RNA-binding</keyword>
<keyword id="KW-0699">rRNA-binding</keyword>
<feature type="chain" id="PRO_0000167944" description="Small ribosomal subunit protein bS20">
    <location>
        <begin position="1"/>
        <end position="98"/>
    </location>
</feature>
<feature type="region of interest" description="Disordered" evidence="2">
    <location>
        <begin position="1"/>
        <end position="34"/>
    </location>
</feature>
<feature type="compositionally biased region" description="Basic residues" evidence="2">
    <location>
        <begin position="1"/>
        <end position="12"/>
    </location>
</feature>
<name>RS20_CHLMU</name>
<sequence length="98" mass="10629">MAPRKPSKKVGPQKRPSAEKRVITSKKKQLRNQSFKSRVKTTLKKFELAVQSGDVASISAGLSSVYSIADKAVKRGIFKKGKADRVKARASGRACPTA</sequence>
<reference key="1">
    <citation type="journal article" date="2000" name="Nucleic Acids Res.">
        <title>Genome sequences of Chlamydia trachomatis MoPn and Chlamydia pneumoniae AR39.</title>
        <authorList>
            <person name="Read T.D."/>
            <person name="Brunham R.C."/>
            <person name="Shen C."/>
            <person name="Gill S.R."/>
            <person name="Heidelberg J.F."/>
            <person name="White O."/>
            <person name="Hickey E.K."/>
            <person name="Peterson J.D."/>
            <person name="Utterback T.R."/>
            <person name="Berry K.J."/>
            <person name="Bass S."/>
            <person name="Linher K.D."/>
            <person name="Weidman J.F."/>
            <person name="Khouri H.M."/>
            <person name="Craven B."/>
            <person name="Bowman C."/>
            <person name="Dodson R.J."/>
            <person name="Gwinn M.L."/>
            <person name="Nelson W.C."/>
            <person name="DeBoy R.T."/>
            <person name="Kolonay J.F."/>
            <person name="McClarty G."/>
            <person name="Salzberg S.L."/>
            <person name="Eisen J.A."/>
            <person name="Fraser C.M."/>
        </authorList>
    </citation>
    <scope>NUCLEOTIDE SEQUENCE [LARGE SCALE GENOMIC DNA]</scope>
    <source>
        <strain>MoPn / Nigg</strain>
    </source>
</reference>
<evidence type="ECO:0000255" key="1">
    <source>
        <dbReference type="HAMAP-Rule" id="MF_00500"/>
    </source>
</evidence>
<evidence type="ECO:0000256" key="2">
    <source>
        <dbReference type="SAM" id="MobiDB-lite"/>
    </source>
</evidence>
<evidence type="ECO:0000305" key="3"/>